<comment type="similarity">
    <text evidence="1">Belongs to the UPF0434 family.</text>
</comment>
<name>Y1718_SERP5</name>
<sequence>MDHRLLEIVACPVCTGKLYFNKENQELVCKVDGLAYPLRDGIPVLLENEARALSLDEKHA</sequence>
<protein>
    <recommendedName>
        <fullName evidence="1">UPF0434 protein Spro_1718</fullName>
    </recommendedName>
</protein>
<organism>
    <name type="scientific">Serratia proteamaculans (strain 568)</name>
    <dbReference type="NCBI Taxonomy" id="399741"/>
    <lineage>
        <taxon>Bacteria</taxon>
        <taxon>Pseudomonadati</taxon>
        <taxon>Pseudomonadota</taxon>
        <taxon>Gammaproteobacteria</taxon>
        <taxon>Enterobacterales</taxon>
        <taxon>Yersiniaceae</taxon>
        <taxon>Serratia</taxon>
    </lineage>
</organism>
<feature type="chain" id="PRO_1000065853" description="UPF0434 protein Spro_1718">
    <location>
        <begin position="1"/>
        <end position="60"/>
    </location>
</feature>
<evidence type="ECO:0000255" key="1">
    <source>
        <dbReference type="HAMAP-Rule" id="MF_01187"/>
    </source>
</evidence>
<gene>
    <name type="ordered locus">Spro_1718</name>
</gene>
<reference key="1">
    <citation type="submission" date="2007-09" db="EMBL/GenBank/DDBJ databases">
        <title>Complete sequence of chromosome of Serratia proteamaculans 568.</title>
        <authorList>
            <consortium name="US DOE Joint Genome Institute"/>
            <person name="Copeland A."/>
            <person name="Lucas S."/>
            <person name="Lapidus A."/>
            <person name="Barry K."/>
            <person name="Glavina del Rio T."/>
            <person name="Dalin E."/>
            <person name="Tice H."/>
            <person name="Pitluck S."/>
            <person name="Chain P."/>
            <person name="Malfatti S."/>
            <person name="Shin M."/>
            <person name="Vergez L."/>
            <person name="Schmutz J."/>
            <person name="Larimer F."/>
            <person name="Land M."/>
            <person name="Hauser L."/>
            <person name="Kyrpides N."/>
            <person name="Kim E."/>
            <person name="Taghavi S."/>
            <person name="Newman L."/>
            <person name="Vangronsveld J."/>
            <person name="van der Lelie D."/>
            <person name="Richardson P."/>
        </authorList>
    </citation>
    <scope>NUCLEOTIDE SEQUENCE [LARGE SCALE GENOMIC DNA]</scope>
    <source>
        <strain>568</strain>
    </source>
</reference>
<dbReference type="EMBL" id="CP000826">
    <property type="protein sequence ID" value="ABV40822.1"/>
    <property type="molecule type" value="Genomic_DNA"/>
</dbReference>
<dbReference type="SMR" id="A8GCI2"/>
<dbReference type="STRING" id="399741.Spro_1718"/>
<dbReference type="KEGG" id="spe:Spro_1718"/>
<dbReference type="eggNOG" id="COG2835">
    <property type="taxonomic scope" value="Bacteria"/>
</dbReference>
<dbReference type="HOGENOM" id="CLU_155659_3_1_6"/>
<dbReference type="OrthoDB" id="9812205at2"/>
<dbReference type="GO" id="GO:0005829">
    <property type="term" value="C:cytosol"/>
    <property type="evidence" value="ECO:0007669"/>
    <property type="project" value="TreeGrafter"/>
</dbReference>
<dbReference type="FunFam" id="2.20.25.10:FF:000002">
    <property type="entry name" value="UPF0434 protein YcaR"/>
    <property type="match status" value="1"/>
</dbReference>
<dbReference type="Gene3D" id="2.20.25.10">
    <property type="match status" value="1"/>
</dbReference>
<dbReference type="HAMAP" id="MF_01187">
    <property type="entry name" value="UPF0434"/>
    <property type="match status" value="1"/>
</dbReference>
<dbReference type="InterPro" id="IPR005651">
    <property type="entry name" value="Trm112-like"/>
</dbReference>
<dbReference type="PANTHER" id="PTHR33505:SF4">
    <property type="entry name" value="PROTEIN PREY, MITOCHONDRIAL"/>
    <property type="match status" value="1"/>
</dbReference>
<dbReference type="PANTHER" id="PTHR33505">
    <property type="entry name" value="ZGC:162634"/>
    <property type="match status" value="1"/>
</dbReference>
<dbReference type="Pfam" id="PF03966">
    <property type="entry name" value="Trm112p"/>
    <property type="match status" value="1"/>
</dbReference>
<dbReference type="SUPFAM" id="SSF158997">
    <property type="entry name" value="Trm112p-like"/>
    <property type="match status" value="1"/>
</dbReference>
<proteinExistence type="inferred from homology"/>
<accession>A8GCI2</accession>